<comment type="catalytic activity">
    <reaction>
        <text>2 glutathione + H2O2 = glutathione disulfide + 2 H2O</text>
        <dbReference type="Rhea" id="RHEA:16833"/>
        <dbReference type="ChEBI" id="CHEBI:15377"/>
        <dbReference type="ChEBI" id="CHEBI:16240"/>
        <dbReference type="ChEBI" id="CHEBI:57925"/>
        <dbReference type="ChEBI" id="CHEBI:58297"/>
        <dbReference type="EC" id="1.11.1.9"/>
    </reaction>
</comment>
<comment type="subcellular location">
    <subcellularLocation>
        <location evidence="1">Secreted</location>
    </subcellularLocation>
</comment>
<comment type="tissue specificity">
    <text evidence="3">Expressed in olfactory epithelium and embryos.</text>
</comment>
<comment type="similarity">
    <text evidence="5">Belongs to the glutathione peroxidase family.</text>
</comment>
<gene>
    <name type="primary">GPX6</name>
</gene>
<protein>
    <recommendedName>
        <fullName>Glutathione peroxidase 6</fullName>
        <shortName>GPx-6</shortName>
        <shortName>GSHPx-6</shortName>
        <ecNumber>1.11.1.9</ecNumber>
    </recommendedName>
</protein>
<proteinExistence type="evidence at protein level"/>
<name>GPX6_HUMAN</name>
<evidence type="ECO:0000250" key="1"/>
<evidence type="ECO:0000255" key="2"/>
<evidence type="ECO:0000269" key="3">
    <source>
    </source>
</evidence>
<evidence type="ECO:0000269" key="4">
    <source ref="2"/>
</evidence>
<evidence type="ECO:0000305" key="5"/>
<dbReference type="EC" id="1.11.1.9"/>
<dbReference type="EMBL" id="AY324826">
    <property type="protein sequence ID" value="AAP85543.1"/>
    <property type="molecule type" value="mRNA"/>
</dbReference>
<dbReference type="EMBL" id="DQ088982">
    <property type="protein sequence ID" value="AAY68223.1"/>
    <property type="molecule type" value="Genomic_DNA"/>
</dbReference>
<dbReference type="EMBL" id="AL049543">
    <property type="status" value="NOT_ANNOTATED_CDS"/>
    <property type="molecule type" value="Genomic_DNA"/>
</dbReference>
<dbReference type="EMBL" id="Z98745">
    <property type="status" value="NOT_ANNOTATED_CDS"/>
    <property type="molecule type" value="Genomic_DNA"/>
</dbReference>
<dbReference type="CCDS" id="CCDS43432.1"/>
<dbReference type="RefSeq" id="NP_874360.1">
    <property type="nucleotide sequence ID" value="NM_182701.1"/>
</dbReference>
<dbReference type="FunCoup" id="P59796">
    <property type="interactions" value="56"/>
</dbReference>
<dbReference type="STRING" id="9606.ENSP00000354581"/>
<dbReference type="DrugBank" id="DB09096">
    <property type="generic name" value="Benzoyl peroxide"/>
</dbReference>
<dbReference type="DrugBank" id="DB00143">
    <property type="generic name" value="Glutathione"/>
</dbReference>
<dbReference type="DrugBank" id="DB03310">
    <property type="generic name" value="Glutathione disulfide"/>
</dbReference>
<dbReference type="PeroxiBase" id="3605">
    <property type="entry name" value="HsGPx06"/>
</dbReference>
<dbReference type="PhosphoSitePlus" id="P59796"/>
<dbReference type="BioMuta" id="GPX6"/>
<dbReference type="DMDM" id="187692196"/>
<dbReference type="MassIVE" id="P59796"/>
<dbReference type="PaxDb" id="9606-ENSP00000354581"/>
<dbReference type="PeptideAtlas" id="P59796"/>
<dbReference type="Antibodypedia" id="6190">
    <property type="antibodies" value="40 antibodies from 14 providers"/>
</dbReference>
<dbReference type="DNASU" id="257202"/>
<dbReference type="Ensembl" id="ENST00000361902.5">
    <property type="protein sequence ID" value="ENSP00000354581.1"/>
    <property type="gene ID" value="ENSG00000198704.10"/>
</dbReference>
<dbReference type="GeneID" id="257202"/>
<dbReference type="KEGG" id="hsa:257202"/>
<dbReference type="MANE-Select" id="ENST00000361902.5">
    <property type="protein sequence ID" value="ENSP00000354581.1"/>
    <property type="RefSeq nucleotide sequence ID" value="NM_182701.1"/>
    <property type="RefSeq protein sequence ID" value="NP_874360.1"/>
</dbReference>
<dbReference type="UCSC" id="uc021yrx.1">
    <property type="organism name" value="human"/>
</dbReference>
<dbReference type="AGR" id="HGNC:4558"/>
<dbReference type="CTD" id="257202"/>
<dbReference type="DisGeNET" id="257202"/>
<dbReference type="GeneCards" id="GPX6"/>
<dbReference type="HGNC" id="HGNC:4558">
    <property type="gene designation" value="GPX6"/>
</dbReference>
<dbReference type="HPA" id="ENSG00000198704">
    <property type="expression patterns" value="Tissue enriched (epididymis)"/>
</dbReference>
<dbReference type="MIM" id="607913">
    <property type="type" value="gene"/>
</dbReference>
<dbReference type="neXtProt" id="NX_P59796"/>
<dbReference type="OpenTargets" id="ENSG00000198704"/>
<dbReference type="PharmGKB" id="PA28954"/>
<dbReference type="VEuPathDB" id="HostDB:ENSG00000198704"/>
<dbReference type="eggNOG" id="KOG1651">
    <property type="taxonomic scope" value="Eukaryota"/>
</dbReference>
<dbReference type="GeneTree" id="ENSGT00940000161098"/>
<dbReference type="HOGENOM" id="CLU_029507_2_1_1"/>
<dbReference type="InParanoid" id="P59796"/>
<dbReference type="OMA" id="WFHRASV"/>
<dbReference type="OrthoDB" id="446890at2759"/>
<dbReference type="PAN-GO" id="P59796">
    <property type="GO annotations" value="1 GO annotation based on evolutionary models"/>
</dbReference>
<dbReference type="PhylomeDB" id="P59796"/>
<dbReference type="TreeFam" id="TF105318"/>
<dbReference type="BRENDA" id="1.11.1.9">
    <property type="organism ID" value="2681"/>
</dbReference>
<dbReference type="PathwayCommons" id="P59796"/>
<dbReference type="Reactome" id="R-HSA-3299685">
    <property type="pathway name" value="Detoxification of Reactive Oxygen Species"/>
</dbReference>
<dbReference type="BioGRID-ORCS" id="257202">
    <property type="hits" value="10 hits in 1146 CRISPR screens"/>
</dbReference>
<dbReference type="GeneWiki" id="GPX6"/>
<dbReference type="GenomeRNAi" id="257202"/>
<dbReference type="Pharos" id="P59796">
    <property type="development level" value="Tdark"/>
</dbReference>
<dbReference type="PRO" id="PR:P59796"/>
<dbReference type="Proteomes" id="UP000005640">
    <property type="component" value="Chromosome 6"/>
</dbReference>
<dbReference type="RNAct" id="P59796">
    <property type="molecule type" value="protein"/>
</dbReference>
<dbReference type="Bgee" id="ENSG00000198704">
    <property type="expression patterns" value="Expressed in male germ line stem cell (sensu Vertebrata) in testis and 9 other cell types or tissues"/>
</dbReference>
<dbReference type="ExpressionAtlas" id="P59796">
    <property type="expression patterns" value="baseline and differential"/>
</dbReference>
<dbReference type="GO" id="GO:0005576">
    <property type="term" value="C:extracellular region"/>
    <property type="evidence" value="ECO:0007669"/>
    <property type="project" value="UniProtKB-SubCell"/>
</dbReference>
<dbReference type="GO" id="GO:0004602">
    <property type="term" value="F:glutathione peroxidase activity"/>
    <property type="evidence" value="ECO:0000318"/>
    <property type="project" value="GO_Central"/>
</dbReference>
<dbReference type="GO" id="GO:0006979">
    <property type="term" value="P:response to oxidative stress"/>
    <property type="evidence" value="ECO:0007669"/>
    <property type="project" value="InterPro"/>
</dbReference>
<dbReference type="CDD" id="cd00340">
    <property type="entry name" value="GSH_Peroxidase"/>
    <property type="match status" value="1"/>
</dbReference>
<dbReference type="FunFam" id="3.40.30.10:FF:000112">
    <property type="entry name" value="Glutathione peroxidase"/>
    <property type="match status" value="1"/>
</dbReference>
<dbReference type="Gene3D" id="3.40.30.10">
    <property type="entry name" value="Glutaredoxin"/>
    <property type="match status" value="1"/>
</dbReference>
<dbReference type="InterPro" id="IPR000889">
    <property type="entry name" value="Glutathione_peroxidase"/>
</dbReference>
<dbReference type="InterPro" id="IPR029759">
    <property type="entry name" value="GPX_AS"/>
</dbReference>
<dbReference type="InterPro" id="IPR029760">
    <property type="entry name" value="GPX_CS"/>
</dbReference>
<dbReference type="InterPro" id="IPR036249">
    <property type="entry name" value="Thioredoxin-like_sf"/>
</dbReference>
<dbReference type="PANTHER" id="PTHR11592">
    <property type="entry name" value="GLUTATHIONE PEROXIDASE"/>
    <property type="match status" value="1"/>
</dbReference>
<dbReference type="PANTHER" id="PTHR11592:SF15">
    <property type="entry name" value="GLUTATHIONE PEROXIDASE 6"/>
    <property type="match status" value="1"/>
</dbReference>
<dbReference type="Pfam" id="PF00255">
    <property type="entry name" value="GSHPx"/>
    <property type="match status" value="1"/>
</dbReference>
<dbReference type="PIRSF" id="PIRSF000303">
    <property type="entry name" value="Glutathion_perox"/>
    <property type="match status" value="1"/>
</dbReference>
<dbReference type="PRINTS" id="PR01011">
    <property type="entry name" value="GLUTPROXDASE"/>
</dbReference>
<dbReference type="SUPFAM" id="SSF52833">
    <property type="entry name" value="Thioredoxin-like"/>
    <property type="match status" value="1"/>
</dbReference>
<dbReference type="PROSITE" id="PS00460">
    <property type="entry name" value="GLUTATHIONE_PEROXID_1"/>
    <property type="match status" value="1"/>
</dbReference>
<dbReference type="PROSITE" id="PS00763">
    <property type="entry name" value="GLUTATHIONE_PEROXID_2"/>
    <property type="match status" value="1"/>
</dbReference>
<dbReference type="PROSITE" id="PS51355">
    <property type="entry name" value="GLUTATHIONE_PEROXID_3"/>
    <property type="match status" value="1"/>
</dbReference>
<sequence length="221" mass="24971">MFQQFQASCLVLFFLVGFAQQTLKPQNRKVDCNKGVTGTIYEYGALTLNGEEYIQFKQFAGKHVLFVNVAAYUGLAAQYPELNALQEELKNFGVIVLAFPCNQFGKQEPGTNSEILLGLKYVCPGSGFVPSFQLFEKGDVNGEKEQKVFTFLKNSCPPTSDLLGSSSQLFWEPMKVHDIRWNFEKFLVGPDGVPVMHWFHQAPVSTVKSDILEYLKQFNTH</sequence>
<feature type="signal peptide" evidence="2">
    <location>
        <begin position="1"/>
        <end position="19"/>
    </location>
</feature>
<feature type="chain" id="PRO_0000013081" description="Glutathione peroxidase 6">
    <location>
        <begin position="20"/>
        <end position="221"/>
    </location>
</feature>
<feature type="active site" evidence="1">
    <location>
        <position position="73"/>
    </location>
</feature>
<feature type="non-standard amino acid" description="Selenocysteine">
    <location>
        <position position="73"/>
    </location>
</feature>
<feature type="sequence variant" id="VAR_025249" description="In dbSNP:rs35510314." evidence="4">
    <original>Q</original>
    <variation>L</variation>
    <location>
        <position position="6"/>
    </location>
</feature>
<feature type="sequence variant" id="VAR_025250" description="In dbSNP:rs406113." evidence="4">
    <original>F</original>
    <variation>L</variation>
    <location>
        <position position="13"/>
    </location>
</feature>
<feature type="sequence variant" id="VAR_025251" description="In dbSNP:rs34825130." evidence="4">
    <original>Y</original>
    <variation>H</variation>
    <location>
        <position position="53"/>
    </location>
</feature>
<feature type="sequence variant" id="VAR_025252" description="In dbSNP:rs6922986." evidence="4">
    <original>Q</original>
    <variation>H</variation>
    <location>
        <position position="58"/>
    </location>
</feature>
<feature type="sequence variant" id="VAR_025253" description="In dbSNP:rs35062161." evidence="4">
    <original>Y</original>
    <variation>N</variation>
    <location>
        <position position="72"/>
    </location>
</feature>
<feature type="sequence variant" id="VAR_025254" description="In dbSNP:rs35394555." evidence="4">
    <original>E</original>
    <variation>D</variation>
    <location>
        <position position="136"/>
    </location>
</feature>
<feature type="sequence variant" id="VAR_025255" description="In dbSNP:rs36055795." evidence="4">
    <original>V</original>
    <variation>M</variation>
    <location>
        <position position="140"/>
    </location>
</feature>
<feature type="sequence variant" id="VAR_025256" description="In dbSNP:rs35658392." evidence="4">
    <original>P</original>
    <variation>S</variation>
    <location>
        <position position="157"/>
    </location>
</feature>
<feature type="sequence variant" id="VAR_025257" description="In dbSNP:rs34955392." evidence="4">
    <original>D</original>
    <variation>G</variation>
    <location>
        <position position="161"/>
    </location>
</feature>
<feature type="sequence variant" id="VAR_025258" description="In dbSNP:rs35701070." evidence="4">
    <original>V</original>
    <variation>A</variation>
    <location>
        <position position="188"/>
    </location>
</feature>
<reference key="1">
    <citation type="journal article" date="2003" name="Science">
        <title>Characterization of mammalian selenoproteomes.</title>
        <authorList>
            <person name="Kryukov G.V."/>
            <person name="Castellano S."/>
            <person name="Novoselov S.V."/>
            <person name="Lobanov A.V."/>
            <person name="Zehtab O."/>
            <person name="Guigo R."/>
            <person name="Gladyshev V.N."/>
        </authorList>
    </citation>
    <scope>NUCLEOTIDE SEQUENCE [MRNA]</scope>
    <scope>TISSUE SPECIFICITY</scope>
</reference>
<reference key="2">
    <citation type="submission" date="2005-06" db="EMBL/GenBank/DDBJ databases">
        <authorList>
            <consortium name="NIEHS SNPs program"/>
        </authorList>
    </citation>
    <scope>NUCLEOTIDE SEQUENCE [GENOMIC DNA]</scope>
    <scope>VARIANTS LEU-6; LEU-13; HIS-53; HIS-58; ASN-72; ASP-136; MET-140; SER-157; GLY-161 AND ALA-188</scope>
</reference>
<reference key="3">
    <citation type="journal article" date="2003" name="Nature">
        <title>The DNA sequence and analysis of human chromosome 6.</title>
        <authorList>
            <person name="Mungall A.J."/>
            <person name="Palmer S.A."/>
            <person name="Sims S.K."/>
            <person name="Edwards C.A."/>
            <person name="Ashurst J.L."/>
            <person name="Wilming L."/>
            <person name="Jones M.C."/>
            <person name="Horton R."/>
            <person name="Hunt S.E."/>
            <person name="Scott C.E."/>
            <person name="Gilbert J.G.R."/>
            <person name="Clamp M.E."/>
            <person name="Bethel G."/>
            <person name="Milne S."/>
            <person name="Ainscough R."/>
            <person name="Almeida J.P."/>
            <person name="Ambrose K.D."/>
            <person name="Andrews T.D."/>
            <person name="Ashwell R.I.S."/>
            <person name="Babbage A.K."/>
            <person name="Bagguley C.L."/>
            <person name="Bailey J."/>
            <person name="Banerjee R."/>
            <person name="Barker D.J."/>
            <person name="Barlow K.F."/>
            <person name="Bates K."/>
            <person name="Beare D.M."/>
            <person name="Beasley H."/>
            <person name="Beasley O."/>
            <person name="Bird C.P."/>
            <person name="Blakey S.E."/>
            <person name="Bray-Allen S."/>
            <person name="Brook J."/>
            <person name="Brown A.J."/>
            <person name="Brown J.Y."/>
            <person name="Burford D.C."/>
            <person name="Burrill W."/>
            <person name="Burton J."/>
            <person name="Carder C."/>
            <person name="Carter N.P."/>
            <person name="Chapman J.C."/>
            <person name="Clark S.Y."/>
            <person name="Clark G."/>
            <person name="Clee C.M."/>
            <person name="Clegg S."/>
            <person name="Cobley V."/>
            <person name="Collier R.E."/>
            <person name="Collins J.E."/>
            <person name="Colman L.K."/>
            <person name="Corby N.R."/>
            <person name="Coville G.J."/>
            <person name="Culley K.M."/>
            <person name="Dhami P."/>
            <person name="Davies J."/>
            <person name="Dunn M."/>
            <person name="Earthrowl M.E."/>
            <person name="Ellington A.E."/>
            <person name="Evans K.A."/>
            <person name="Faulkner L."/>
            <person name="Francis M.D."/>
            <person name="Frankish A."/>
            <person name="Frankland J."/>
            <person name="French L."/>
            <person name="Garner P."/>
            <person name="Garnett J."/>
            <person name="Ghori M.J."/>
            <person name="Gilby L.M."/>
            <person name="Gillson C.J."/>
            <person name="Glithero R.J."/>
            <person name="Grafham D.V."/>
            <person name="Grant M."/>
            <person name="Gribble S."/>
            <person name="Griffiths C."/>
            <person name="Griffiths M.N.D."/>
            <person name="Hall R."/>
            <person name="Halls K.S."/>
            <person name="Hammond S."/>
            <person name="Harley J.L."/>
            <person name="Hart E.A."/>
            <person name="Heath P.D."/>
            <person name="Heathcott R."/>
            <person name="Holmes S.J."/>
            <person name="Howden P.J."/>
            <person name="Howe K.L."/>
            <person name="Howell G.R."/>
            <person name="Huckle E."/>
            <person name="Humphray S.J."/>
            <person name="Humphries M.D."/>
            <person name="Hunt A.R."/>
            <person name="Johnson C.M."/>
            <person name="Joy A.A."/>
            <person name="Kay M."/>
            <person name="Keenan S.J."/>
            <person name="Kimberley A.M."/>
            <person name="King A."/>
            <person name="Laird G.K."/>
            <person name="Langford C."/>
            <person name="Lawlor S."/>
            <person name="Leongamornlert D.A."/>
            <person name="Leversha M."/>
            <person name="Lloyd C.R."/>
            <person name="Lloyd D.M."/>
            <person name="Loveland J.E."/>
            <person name="Lovell J."/>
            <person name="Martin S."/>
            <person name="Mashreghi-Mohammadi M."/>
            <person name="Maslen G.L."/>
            <person name="Matthews L."/>
            <person name="McCann O.T."/>
            <person name="McLaren S.J."/>
            <person name="McLay K."/>
            <person name="McMurray A."/>
            <person name="Moore M.J.F."/>
            <person name="Mullikin J.C."/>
            <person name="Niblett D."/>
            <person name="Nickerson T."/>
            <person name="Novik K.L."/>
            <person name="Oliver K."/>
            <person name="Overton-Larty E.K."/>
            <person name="Parker A."/>
            <person name="Patel R."/>
            <person name="Pearce A.V."/>
            <person name="Peck A.I."/>
            <person name="Phillimore B.J.C.T."/>
            <person name="Phillips S."/>
            <person name="Plumb R.W."/>
            <person name="Porter K.M."/>
            <person name="Ramsey Y."/>
            <person name="Ranby S.A."/>
            <person name="Rice C.M."/>
            <person name="Ross M.T."/>
            <person name="Searle S.M."/>
            <person name="Sehra H.K."/>
            <person name="Sheridan E."/>
            <person name="Skuce C.D."/>
            <person name="Smith S."/>
            <person name="Smith M."/>
            <person name="Spraggon L."/>
            <person name="Squares S.L."/>
            <person name="Steward C.A."/>
            <person name="Sycamore N."/>
            <person name="Tamlyn-Hall G."/>
            <person name="Tester J."/>
            <person name="Theaker A.J."/>
            <person name="Thomas D.W."/>
            <person name="Thorpe A."/>
            <person name="Tracey A."/>
            <person name="Tromans A."/>
            <person name="Tubby B."/>
            <person name="Wall M."/>
            <person name="Wallis J.M."/>
            <person name="West A.P."/>
            <person name="White S.S."/>
            <person name="Whitehead S.L."/>
            <person name="Whittaker H."/>
            <person name="Wild A."/>
            <person name="Willey D.J."/>
            <person name="Wilmer T.E."/>
            <person name="Wood J.M."/>
            <person name="Wray P.W."/>
            <person name="Wyatt J.C."/>
            <person name="Young L."/>
            <person name="Younger R.M."/>
            <person name="Bentley D.R."/>
            <person name="Coulson A."/>
            <person name="Durbin R.M."/>
            <person name="Hubbard T."/>
            <person name="Sulston J.E."/>
            <person name="Dunham I."/>
            <person name="Rogers J."/>
            <person name="Beck S."/>
        </authorList>
    </citation>
    <scope>NUCLEOTIDE SEQUENCE [LARGE SCALE GENOMIC DNA]</scope>
</reference>
<keyword id="KW-0560">Oxidoreductase</keyword>
<keyword id="KW-0575">Peroxidase</keyword>
<keyword id="KW-1267">Proteomics identification</keyword>
<keyword id="KW-1185">Reference proteome</keyword>
<keyword id="KW-0964">Secreted</keyword>
<keyword id="KW-0712">Selenocysteine</keyword>
<keyword id="KW-0732">Signal</keyword>
<organism>
    <name type="scientific">Homo sapiens</name>
    <name type="common">Human</name>
    <dbReference type="NCBI Taxonomy" id="9606"/>
    <lineage>
        <taxon>Eukaryota</taxon>
        <taxon>Metazoa</taxon>
        <taxon>Chordata</taxon>
        <taxon>Craniata</taxon>
        <taxon>Vertebrata</taxon>
        <taxon>Euteleostomi</taxon>
        <taxon>Mammalia</taxon>
        <taxon>Eutheria</taxon>
        <taxon>Euarchontoglires</taxon>
        <taxon>Primates</taxon>
        <taxon>Haplorrhini</taxon>
        <taxon>Catarrhini</taxon>
        <taxon>Hominidae</taxon>
        <taxon>Homo</taxon>
    </lineage>
</organism>
<accession>P59796</accession>
<accession>Q4PJ17</accession>